<protein>
    <recommendedName>
        <fullName>FAD assembly factor SdhE</fullName>
    </recommendedName>
</protein>
<name>SDHE_PSEU2</name>
<comment type="function">
    <text evidence="1">An FAD assembly protein, which accelerates covalent attachment of the cofactor into other proteins. Plays an essential role in the assembly of succinate dehydrogenase (SDH, respiratory complex II), an enzyme complex that is a component of both the tricarboxylic acid cycle and the electron transport chain, and which couples the oxidation of succinate to fumarate with the reduction of ubiquinone (coenzyme Q) to ubiquinol. Required for flavinylation (covalent attachment of FAD) of the flavoprotein subunit SdhA of SDH and other flavinylated proteins as well.</text>
</comment>
<comment type="subcellular location">
    <subcellularLocation>
        <location evidence="1">Cytoplasm</location>
    </subcellularLocation>
</comment>
<comment type="similarity">
    <text evidence="2">Belongs to the SdhE FAD assembly factor family.</text>
</comment>
<feature type="chain" id="PRO_0000214416" description="FAD assembly factor SdhE">
    <location>
        <begin position="1"/>
        <end position="84"/>
    </location>
</feature>
<sequence length="84" mass="10328">MVEDVELNRLYWHSRRGMLELDVLLVPFVREVYPHLNDVDRDLYRRLLTCEDQDMFGWFMQRAESEDAELQRMVRMILDRVQPQ</sequence>
<evidence type="ECO:0000250" key="1">
    <source>
        <dbReference type="UniProtKB" id="G4V4G2"/>
    </source>
</evidence>
<evidence type="ECO:0000305" key="2"/>
<organism>
    <name type="scientific">Pseudomonas syringae pv. syringae (strain B728a)</name>
    <dbReference type="NCBI Taxonomy" id="205918"/>
    <lineage>
        <taxon>Bacteria</taxon>
        <taxon>Pseudomonadati</taxon>
        <taxon>Pseudomonadota</taxon>
        <taxon>Gammaproteobacteria</taxon>
        <taxon>Pseudomonadales</taxon>
        <taxon>Pseudomonadaceae</taxon>
        <taxon>Pseudomonas</taxon>
        <taxon>Pseudomonas syringae</taxon>
    </lineage>
</organism>
<gene>
    <name type="primary">sdhE</name>
    <name type="ordered locus">Psyr_3961</name>
</gene>
<accession>Q4ZPD1</accession>
<reference key="1">
    <citation type="journal article" date="2005" name="Proc. Natl. Acad. Sci. U.S.A.">
        <title>Comparison of the complete genome sequences of Pseudomonas syringae pv. syringae B728a and pv. tomato DC3000.</title>
        <authorList>
            <person name="Feil H."/>
            <person name="Feil W.S."/>
            <person name="Chain P."/>
            <person name="Larimer F."/>
            <person name="Dibartolo G."/>
            <person name="Copeland A."/>
            <person name="Lykidis A."/>
            <person name="Trong S."/>
            <person name="Nolan M."/>
            <person name="Goltsman E."/>
            <person name="Thiel J."/>
            <person name="Malfatti S."/>
            <person name="Loper J.E."/>
            <person name="Lapidus A."/>
            <person name="Detter J.C."/>
            <person name="Land M."/>
            <person name="Richardson P.M."/>
            <person name="Kyrpides N.C."/>
            <person name="Ivanova N."/>
            <person name="Lindow S.E."/>
        </authorList>
    </citation>
    <scope>NUCLEOTIDE SEQUENCE [LARGE SCALE GENOMIC DNA]</scope>
    <source>
        <strain>B728a</strain>
    </source>
</reference>
<dbReference type="EMBL" id="CP000075">
    <property type="protein sequence ID" value="AAY38991.1"/>
    <property type="molecule type" value="Genomic_DNA"/>
</dbReference>
<dbReference type="RefSeq" id="WP_003363729.1">
    <property type="nucleotide sequence ID" value="NC_007005.1"/>
</dbReference>
<dbReference type="RefSeq" id="YP_237029.1">
    <property type="nucleotide sequence ID" value="NC_007005.1"/>
</dbReference>
<dbReference type="SMR" id="Q4ZPD1"/>
<dbReference type="STRING" id="205918.Psyr_3961"/>
<dbReference type="KEGG" id="psb:Psyr_3961"/>
<dbReference type="PATRIC" id="fig|205918.7.peg.4078"/>
<dbReference type="eggNOG" id="COG2938">
    <property type="taxonomic scope" value="Bacteria"/>
</dbReference>
<dbReference type="HOGENOM" id="CLU_103054_2_2_6"/>
<dbReference type="OrthoDB" id="9180899at2"/>
<dbReference type="Proteomes" id="UP000000426">
    <property type="component" value="Chromosome"/>
</dbReference>
<dbReference type="GO" id="GO:0005737">
    <property type="term" value="C:cytoplasm"/>
    <property type="evidence" value="ECO:0007669"/>
    <property type="project" value="UniProtKB-SubCell"/>
</dbReference>
<dbReference type="GO" id="GO:0006105">
    <property type="term" value="P:succinate metabolic process"/>
    <property type="evidence" value="ECO:0007669"/>
    <property type="project" value="TreeGrafter"/>
</dbReference>
<dbReference type="Gene3D" id="1.10.150.250">
    <property type="entry name" value="Flavinator of succinate dehydrogenase"/>
    <property type="match status" value="1"/>
</dbReference>
<dbReference type="InterPro" id="IPR005631">
    <property type="entry name" value="SDH"/>
</dbReference>
<dbReference type="InterPro" id="IPR036714">
    <property type="entry name" value="SDH_sf"/>
</dbReference>
<dbReference type="InterPro" id="IPR050531">
    <property type="entry name" value="SdhE_FAD_assembly_factor"/>
</dbReference>
<dbReference type="PANTHER" id="PTHR39585">
    <property type="entry name" value="FAD ASSEMBLY FACTOR SDHE"/>
    <property type="match status" value="1"/>
</dbReference>
<dbReference type="PANTHER" id="PTHR39585:SF1">
    <property type="entry name" value="FAD ASSEMBLY FACTOR SDHE"/>
    <property type="match status" value="1"/>
</dbReference>
<dbReference type="Pfam" id="PF03937">
    <property type="entry name" value="Sdh5"/>
    <property type="match status" value="1"/>
</dbReference>
<dbReference type="SUPFAM" id="SSF109910">
    <property type="entry name" value="YgfY-like"/>
    <property type="match status" value="1"/>
</dbReference>
<proteinExistence type="inferred from homology"/>
<keyword id="KW-0143">Chaperone</keyword>
<keyword id="KW-0963">Cytoplasm</keyword>